<feature type="chain" id="PRO_0000096942" description="Nucleolar and coiled-body phosphoprotein 1">
    <location>
        <begin position="1"/>
        <end position="699"/>
    </location>
</feature>
<feature type="domain" description="LisH" evidence="3">
    <location>
        <begin position="10"/>
        <end position="42"/>
    </location>
</feature>
<feature type="repeat" description="Acidic serine cluster 1">
    <location>
        <begin position="84"/>
        <end position="95"/>
    </location>
</feature>
<feature type="repeat" description="Acidic serine cluster 2">
    <location>
        <begin position="125"/>
        <end position="136"/>
    </location>
</feature>
<feature type="repeat" description="Acidic serine cluster 3">
    <location>
        <begin position="167"/>
        <end position="178"/>
    </location>
</feature>
<feature type="repeat" description="Acidic serine cluster 4">
    <location>
        <begin position="221"/>
        <end position="232"/>
    </location>
</feature>
<feature type="repeat" description="Acidic serine cluster 5">
    <location>
        <begin position="264"/>
        <end position="275"/>
    </location>
</feature>
<feature type="repeat" description="Acidic serine cluster 6">
    <location>
        <begin position="325"/>
        <end position="336"/>
    </location>
</feature>
<feature type="repeat" description="Acidic serine cluster 7">
    <location>
        <begin position="363"/>
        <end position="375"/>
    </location>
</feature>
<feature type="repeat" description="Acidic serine cluster 8">
    <location>
        <begin position="425"/>
        <end position="436"/>
    </location>
</feature>
<feature type="repeat" description="Acidic serine cluster 9">
    <location>
        <begin position="470"/>
        <end position="481"/>
    </location>
</feature>
<feature type="repeat" description="Acidic serine cluster 10">
    <location>
        <begin position="519"/>
        <end position="529"/>
    </location>
</feature>
<feature type="repeat" description="Acidic serine cluster 11">
    <location>
        <begin position="555"/>
        <end position="566"/>
    </location>
</feature>
<feature type="region of interest" description="Disordered" evidence="4">
    <location>
        <begin position="65"/>
        <end position="637"/>
    </location>
</feature>
<feature type="region of interest" description="11 X 12 AA approximate repeats of an acidic serine cluster">
    <location>
        <begin position="84"/>
        <end position="566"/>
    </location>
</feature>
<feature type="region of interest" description="Interaction with RPA194">
    <location>
        <begin position="204"/>
        <end position="382"/>
    </location>
</feature>
<feature type="compositionally biased region" description="Acidic residues" evidence="4">
    <location>
        <begin position="86"/>
        <end position="97"/>
    </location>
</feature>
<feature type="compositionally biased region" description="Low complexity" evidence="4">
    <location>
        <begin position="100"/>
        <end position="110"/>
    </location>
</feature>
<feature type="compositionally biased region" description="Low complexity" evidence="4">
    <location>
        <begin position="144"/>
        <end position="159"/>
    </location>
</feature>
<feature type="compositionally biased region" description="Low complexity" evidence="4">
    <location>
        <begin position="193"/>
        <end position="227"/>
    </location>
</feature>
<feature type="compositionally biased region" description="Low complexity" evidence="4">
    <location>
        <begin position="236"/>
        <end position="261"/>
    </location>
</feature>
<feature type="compositionally biased region" description="Pro residues" evidence="4">
    <location>
        <begin position="291"/>
        <end position="301"/>
    </location>
</feature>
<feature type="compositionally biased region" description="Acidic residues" evidence="4">
    <location>
        <begin position="321"/>
        <end position="333"/>
    </location>
</feature>
<feature type="compositionally biased region" description="Acidic residues" evidence="4">
    <location>
        <begin position="366"/>
        <end position="375"/>
    </location>
</feature>
<feature type="compositionally biased region" description="Polar residues" evidence="4">
    <location>
        <begin position="381"/>
        <end position="397"/>
    </location>
</feature>
<feature type="compositionally biased region" description="Low complexity" evidence="4">
    <location>
        <begin position="398"/>
        <end position="409"/>
    </location>
</feature>
<feature type="compositionally biased region" description="Low complexity" evidence="4">
    <location>
        <begin position="441"/>
        <end position="476"/>
    </location>
</feature>
<feature type="compositionally biased region" description="Low complexity" evidence="4">
    <location>
        <begin position="498"/>
        <end position="523"/>
    </location>
</feature>
<feature type="compositionally biased region" description="Polar residues" evidence="4">
    <location>
        <begin position="547"/>
        <end position="556"/>
    </location>
</feature>
<feature type="compositionally biased region" description="Basic and acidic residues" evidence="4">
    <location>
        <begin position="627"/>
        <end position="637"/>
    </location>
</feature>
<feature type="modified residue" description="N6-acetyllysine" evidence="23">
    <location>
        <position position="33"/>
    </location>
</feature>
<feature type="modified residue" description="Phosphoserine" evidence="22">
    <location>
        <position position="87"/>
    </location>
</feature>
<feature type="modified residue" description="Phosphoserine" evidence="22">
    <location>
        <position position="90"/>
    </location>
</feature>
<feature type="modified residue" description="Diphosphoserine" evidence="1">
    <location>
        <position position="91"/>
    </location>
</feature>
<feature type="modified residue" description="Phosphoserine" evidence="22">
    <location>
        <position position="91"/>
    </location>
</feature>
<feature type="modified residue" description="Phosphothreonine" evidence="27">
    <location>
        <position position="188"/>
    </location>
</feature>
<feature type="modified residue" description="Phosphoserine" evidence="29">
    <location>
        <position position="362"/>
    </location>
</feature>
<feature type="modified residue" description="Phosphoserine" evidence="29">
    <location>
        <position position="363"/>
    </location>
</feature>
<feature type="modified residue" description="Phosphoserine" evidence="22">
    <location>
        <position position="366"/>
    </location>
</feature>
<feature type="modified residue" description="Phosphoserine" evidence="25 26 27">
    <location>
        <position position="397"/>
    </location>
</feature>
<feature type="modified residue" description="N6-acetyllysine; alternate" evidence="23">
    <location>
        <position position="415"/>
    </location>
</feature>
<feature type="modified residue" description="Phosphoserine" evidence="27">
    <location>
        <position position="456"/>
    </location>
</feature>
<feature type="modified residue" description="Phosphoserine" evidence="20 22 25 27">
    <location>
        <position position="508"/>
    </location>
</feature>
<feature type="modified residue" description="Phosphoserine" evidence="19 20 25 26 27">
    <location>
        <position position="538"/>
    </location>
</feature>
<feature type="modified residue" description="Phosphoserine" evidence="19 21 25">
    <location>
        <position position="563"/>
    </location>
</feature>
<feature type="modified residue" description="Phosphoserine" evidence="22 25">
    <location>
        <position position="580"/>
    </location>
</feature>
<feature type="modified residue" description="Phosphoserine" evidence="22 25">
    <location>
        <position position="582"/>
    </location>
</feature>
<feature type="modified residue" description="Phosphothreonine" evidence="17 18 20 27">
    <location>
        <position position="607"/>
    </location>
</feature>
<feature type="modified residue" description="Phosphothreonine" evidence="17 18 20 27">
    <location>
        <position position="610"/>
    </location>
</feature>
<feature type="modified residue" description="Phosphoserine" evidence="26">
    <location>
        <position position="622"/>
    </location>
</feature>
<feature type="modified residue" description="Phosphoserine" evidence="18 20 25 26 27">
    <location>
        <position position="643"/>
    </location>
</feature>
<feature type="modified residue" description="N6-acetyllysine; alternate" evidence="23">
    <location>
        <position position="663"/>
    </location>
</feature>
<feature type="modified residue" description="Omega-N-methylarginine" evidence="28">
    <location>
        <position position="683"/>
    </location>
</feature>
<feature type="modified residue" description="Phosphoserine" evidence="22">
    <location>
        <position position="686"/>
    </location>
</feature>
<feature type="modified residue" description="Phosphoserine" evidence="18 19 22 24 25 26 27 29">
    <location>
        <position position="698"/>
    </location>
</feature>
<feature type="cross-link" description="Glycyl lysine isopeptide (Lys-Gly) (interchain with G-Cter in SUMO2)" evidence="31 32 33 34">
    <location>
        <position position="67"/>
    </location>
</feature>
<feature type="cross-link" description="Glycyl lysine isopeptide (Lys-Gly) (interchain with G-Cter in SUMO2)" evidence="34">
    <location>
        <position position="76"/>
    </location>
</feature>
<feature type="cross-link" description="Glycyl lysine isopeptide (Lys-Gly) (interchain with G-Cter in SUMO2)" evidence="34">
    <location>
        <position position="186"/>
    </location>
</feature>
<feature type="cross-link" description="Glycyl lysine isopeptide (Lys-Gly) (interchain with G-Cter in SUMO2)" evidence="31 32 34">
    <location>
        <position position="193"/>
    </location>
</feature>
<feature type="cross-link" description="Glycyl lysine isopeptide (Lys-Gly) (interchain with G-Cter in SUMO2)" evidence="34">
    <location>
        <position position="342"/>
    </location>
</feature>
<feature type="cross-link" description="Glycyl lysine isopeptide (Lys-Gly) (interchain with G-Cter in SUMO2)" evidence="34">
    <location>
        <position position="347"/>
    </location>
</feature>
<feature type="cross-link" description="Glycyl lysine isopeptide (Lys-Gly) (interchain with G-Cter in SUMO2)" evidence="34">
    <location>
        <position position="390"/>
    </location>
</feature>
<feature type="cross-link" description="Glycyl lysine isopeptide (Lys-Gly) (interchain with G-Cter in SUMO2)" evidence="34">
    <location>
        <position position="396"/>
    </location>
</feature>
<feature type="cross-link" description="Glycyl lysine isopeptide (Lys-Gly) (interchain with G-Cter in SUMO2)" evidence="34">
    <location>
        <position position="401"/>
    </location>
</feature>
<feature type="cross-link" description="Glycyl lysine isopeptide (Lys-Gly) (interchain with G-Cter in SUMO2)" evidence="34">
    <location>
        <position position="407"/>
    </location>
</feature>
<feature type="cross-link" description="Glycyl lysine isopeptide (Lys-Gly) (interchain with G-Cter in SUMO1); alternate" evidence="30">
    <location>
        <position position="415"/>
    </location>
</feature>
<feature type="cross-link" description="Glycyl lysine isopeptide (Lys-Gly) (interchain with G-Cter in SUMO2); alternate" evidence="34">
    <location>
        <position position="415"/>
    </location>
</feature>
<feature type="cross-link" description="Glycyl lysine isopeptide (Lys-Gly) (interchain with G-Cter in SUMO2)" evidence="34">
    <location>
        <position position="440"/>
    </location>
</feature>
<feature type="cross-link" description="Glycyl lysine isopeptide (Lys-Gly) (interchain with G-Cter in SUMO2)" evidence="34">
    <location>
        <position position="452"/>
    </location>
</feature>
<feature type="cross-link" description="Glycyl lysine isopeptide (Lys-Gly) (interchain with G-Cter in SUMO2)" evidence="34">
    <location>
        <position position="505"/>
    </location>
</feature>
<feature type="cross-link" description="Glycyl lysine isopeptide (Lys-Gly) (interchain with G-Cter in SUMO1)" evidence="30">
    <location>
        <position position="572"/>
    </location>
</feature>
<feature type="cross-link" description="Glycyl lysine isopeptide (Lys-Gly) (interchain with G-Cter in SUMO2)" evidence="34">
    <location>
        <position position="579"/>
    </location>
</feature>
<feature type="cross-link" description="Glycyl lysine isopeptide (Lys-Gly) (interchain with G-Cter in SUMO2)" evidence="33 34">
    <location>
        <position position="604"/>
    </location>
</feature>
<feature type="cross-link" description="Glycyl lysine isopeptide (Lys-Gly) (interchain with G-Cter in SUMO2)" evidence="34">
    <location>
        <position position="613"/>
    </location>
</feature>
<feature type="cross-link" description="Glycyl lysine isopeptide (Lys-Gly) (interchain with G-Cter in SUMO2)" evidence="34">
    <location>
        <position position="647"/>
    </location>
</feature>
<feature type="cross-link" description="Glycyl lysine isopeptide (Lys-Gly) (interchain with G-Cter in SUMO2); alternate" evidence="34">
    <location>
        <position position="663"/>
    </location>
</feature>
<feature type="cross-link" description="Glycyl lysine isopeptide (Lys-Gly) (interchain with G-Cter in SUMO2)" evidence="34">
    <location>
        <position position="695"/>
    </location>
</feature>
<feature type="splice variant" id="VSP_035415" description="In isoform 3." evidence="11 14">
    <original>LK</original>
    <variation>LNR</variation>
    <location>
        <begin position="58"/>
        <end position="59"/>
    </location>
</feature>
<feature type="splice variant" id="VSP_004338" description="In isoform Beta." evidence="12">
    <original>K</original>
    <variation>KVWTITSVRAE</variation>
    <location>
        <position position="241"/>
    </location>
</feature>
<feature type="sequence variant" id="VAR_031677" description="In dbSNP:rs11191224.">
    <original>G</original>
    <variation>V</variation>
    <location>
        <position position="412"/>
    </location>
</feature>
<feature type="sequence variant" id="VAR_031678" description="In dbSNP:rs1049455." evidence="7">
    <original>S</original>
    <variation>P</variation>
    <location>
        <position position="456"/>
    </location>
</feature>
<feature type="sequence conflict" description="In Ref. 6; BAA04803." evidence="15" ref="6">
    <original>D</original>
    <variation>A</variation>
    <location>
        <position position="3"/>
    </location>
</feature>
<feature type="sequence conflict" description="In Ref. 1; CAA84063." evidence="15" ref="1">
    <original>S</original>
    <variation>R</variation>
    <location>
        <position position="133"/>
    </location>
</feature>
<feature type="sequence conflict" description="In Ref. 1; CAA84063." evidence="15" ref="1">
    <original>SV</original>
    <variation>YA</variation>
    <location>
        <begin position="291"/>
        <end position="292"/>
    </location>
</feature>
<accession>Q14978</accession>
<accession>Q15030</accession>
<accession>Q5VV70</accession>
<accession>Q9BUV3</accession>
<name>NOLC1_HUMAN</name>
<gene>
    <name evidence="16" type="primary">NOLC1</name>
    <name evidence="12" type="synonym">KIAA0035</name>
    <name type="synonym">NS5ATP13</name>
</gene>
<organism>
    <name type="scientific">Homo sapiens</name>
    <name type="common">Human</name>
    <dbReference type="NCBI Taxonomy" id="9606"/>
    <lineage>
        <taxon>Eukaryota</taxon>
        <taxon>Metazoa</taxon>
        <taxon>Chordata</taxon>
        <taxon>Craniata</taxon>
        <taxon>Vertebrata</taxon>
        <taxon>Euteleostomi</taxon>
        <taxon>Mammalia</taxon>
        <taxon>Eutheria</taxon>
        <taxon>Euarchontoglires</taxon>
        <taxon>Primates</taxon>
        <taxon>Haplorrhini</taxon>
        <taxon>Catarrhini</taxon>
        <taxon>Hominidae</taxon>
        <taxon>Homo</taxon>
    </lineage>
</organism>
<protein>
    <recommendedName>
        <fullName evidence="15">Nucleolar and coiled-body phosphoprotein 1</fullName>
    </recommendedName>
    <alternativeName>
        <fullName evidence="10">140 kDa nucleolar phosphoprotein</fullName>
        <shortName evidence="10">Nopp140</shortName>
    </alternativeName>
    <alternativeName>
        <fullName>Hepatitis C virus NS5A-transactivated protein 13</fullName>
        <shortName>HCV NS5A-transactivated protein 13</shortName>
    </alternativeName>
    <alternativeName>
        <fullName evidence="13">Nucleolar 130 kDa protein</fullName>
    </alternativeName>
    <alternativeName>
        <fullName evidence="13">Nucleolar phosphoprotein p130</fullName>
    </alternativeName>
</protein>
<comment type="function">
    <text evidence="5 6 9">Nucleolar protein that acts as a regulator of RNA polymerase I by connecting RNA polymerase I with enzymes responsible for ribosomal processing and modification (PubMed:10567578, PubMed:26399832). Required for neural crest specification: following monoubiquitination by the BCR(KBTBD8) complex, associates with TCOF1 and acts as a platform to connect RNA polymerase I with enzymes responsible for ribosomal processing and modification, leading to remodel the translational program of differentiating cells in favor of neural crest specification (PubMed:26399832). Involved in nucleologenesis, possibly by playing a role in the maintenance of the fundamental structure of the fibrillar center and dense fibrillar component in the nucleolus (PubMed:9016786). It has intrinsic GTPase and ATPase activities (PubMed:9016786).</text>
</comment>
<comment type="subunit">
    <text evidence="2 5 6">Heterodimer; heterodimerizes with TCOF1 following monoubiquitination (PubMed:26399832). Interacts with RNA polymerase I 194 kDa subunit (RPA194) and with casein kinase-II (PubMed:10567578). Interacts with DKC1/NAP57, NOP58 and fibrillarin (By similarity).</text>
</comment>
<comment type="interaction">
    <interactant intactId="EBI-396155">
        <id>Q14978</id>
    </interactant>
    <interactant intactId="EBI-743313">
        <id>P49407</id>
        <label>ARRB1</label>
    </interactant>
    <organismsDiffer>false</organismsDiffer>
    <experiments>5</experiments>
</comment>
<comment type="interaction">
    <interactant intactId="EBI-396155">
        <id>Q14978</id>
    </interactant>
    <interactant intactId="EBI-714559">
        <id>P32121</id>
        <label>ARRB2</label>
    </interactant>
    <organismsDiffer>false</organismsDiffer>
    <experiments>6</experiments>
</comment>
<comment type="interaction">
    <interactant intactId="EBI-396155">
        <id>Q14978</id>
    </interactant>
    <interactant intactId="EBI-54493585">
        <id>Q15283</id>
        <label>RASA2</label>
    </interactant>
    <organismsDiffer>false</organismsDiffer>
    <experiments>2</experiments>
</comment>
<comment type="interaction">
    <interactant intactId="EBI-396155">
        <id>Q14978</id>
    </interactant>
    <interactant intactId="EBI-6179719">
        <id>PRO_0000038593</id>
        <label>gag</label>
        <dbReference type="UniProtKB" id="P04591"/>
    </interactant>
    <organismsDiffer>true</organismsDiffer>
    <experiments>2</experiments>
</comment>
<comment type="subcellular location">
    <subcellularLocation>
        <location evidence="8">Nucleus</location>
        <location evidence="8">Nucleolus</location>
    </subcellularLocation>
    <subcellularLocation>
        <location evidence="8">Cytoplasm</location>
    </subcellularLocation>
    <text evidence="8">Shuttles between the nucleolus and the cytoplasm. At telophase it begins to assemble into granular-like pre-nucleolar bodies which are subsequently relocated to nucleoli at the early G1-phase.</text>
</comment>
<comment type="alternative products">
    <event type="alternative splicing"/>
    <isoform>
        <id>Q14978-1</id>
        <name>Alpha</name>
        <sequence type="displayed"/>
    </isoform>
    <isoform>
        <id>Q14978-2</id>
        <name>Beta</name>
        <sequence type="described" ref="VSP_004338"/>
    </isoform>
    <isoform>
        <id>Q14978-3</id>
        <name>3</name>
        <sequence type="described" ref="VSP_035415"/>
    </isoform>
</comment>
<comment type="PTM">
    <text evidence="8">Undergoes rapid and massive phosphorylation/dephosphorylation cycles on CK2 and PKC sites. NOLC1 is one of the mostly phosphorylated proteins in the cell.</text>
</comment>
<comment type="PTM">
    <text evidence="6">Ubiquitinated. Monoubiquitination by the BCR(KBTBD8) complex promotes the formation of a NOLC1-TCOF1 complex that acts as a platform to connect RNA polymerase I with enzymes responsible for ribosomal processing and modification, leading to remodel the translational program of differentiating cells in favor of neural crest specification (PubMed:26399832).</text>
</comment>
<comment type="PTM">
    <text evidence="1">Pyrophosphorylated by 5-diphosphoinositol pentakisphosphate (5-IP7). Serine pyrophosphorylation is achieved by Mg(2+)-dependent, but enzyme independent transfer of a beta-phosphate from a inositol pyrophosphate to a pre-phosphorylated serine residue.</text>
</comment>
<comment type="similarity">
    <text evidence="15">Belongs to the NOLC1 family.</text>
</comment>
<proteinExistence type="evidence at protein level"/>
<evidence type="ECO:0000250" key="1">
    <source>
        <dbReference type="UniProtKB" id="E9Q5C9"/>
    </source>
</evidence>
<evidence type="ECO:0000250" key="2">
    <source>
        <dbReference type="UniProtKB" id="P41777"/>
    </source>
</evidence>
<evidence type="ECO:0000255" key="3">
    <source>
        <dbReference type="PROSITE-ProRule" id="PRU00126"/>
    </source>
</evidence>
<evidence type="ECO:0000256" key="4">
    <source>
        <dbReference type="SAM" id="MobiDB-lite"/>
    </source>
</evidence>
<evidence type="ECO:0000269" key="5">
    <source>
    </source>
</evidence>
<evidence type="ECO:0000269" key="6">
    <source>
    </source>
</evidence>
<evidence type="ECO:0000269" key="7">
    <source>
    </source>
</evidence>
<evidence type="ECO:0000269" key="8">
    <source>
    </source>
</evidence>
<evidence type="ECO:0000269" key="9">
    <source>
    </source>
</evidence>
<evidence type="ECO:0000303" key="10">
    <source>
    </source>
</evidence>
<evidence type="ECO:0000303" key="11">
    <source>
    </source>
</evidence>
<evidence type="ECO:0000303" key="12">
    <source>
    </source>
</evidence>
<evidence type="ECO:0000303" key="13">
    <source>
    </source>
</evidence>
<evidence type="ECO:0000303" key="14">
    <source ref="2"/>
</evidence>
<evidence type="ECO:0000305" key="15"/>
<evidence type="ECO:0000312" key="16">
    <source>
        <dbReference type="HGNC" id="HGNC:15608"/>
    </source>
</evidence>
<evidence type="ECO:0007744" key="17">
    <source>
    </source>
</evidence>
<evidence type="ECO:0007744" key="18">
    <source>
    </source>
</evidence>
<evidence type="ECO:0007744" key="19">
    <source>
    </source>
</evidence>
<evidence type="ECO:0007744" key="20">
    <source>
    </source>
</evidence>
<evidence type="ECO:0007744" key="21">
    <source>
    </source>
</evidence>
<evidence type="ECO:0007744" key="22">
    <source>
    </source>
</evidence>
<evidence type="ECO:0007744" key="23">
    <source>
    </source>
</evidence>
<evidence type="ECO:0007744" key="24">
    <source>
    </source>
</evidence>
<evidence type="ECO:0007744" key="25">
    <source>
    </source>
</evidence>
<evidence type="ECO:0007744" key="26">
    <source>
    </source>
</evidence>
<evidence type="ECO:0007744" key="27">
    <source>
    </source>
</evidence>
<evidence type="ECO:0007744" key="28">
    <source>
    </source>
</evidence>
<evidence type="ECO:0007744" key="29">
    <source>
    </source>
</evidence>
<evidence type="ECO:0007744" key="30">
    <source>
    </source>
</evidence>
<evidence type="ECO:0007744" key="31">
    <source>
    </source>
</evidence>
<evidence type="ECO:0007744" key="32">
    <source>
    </source>
</evidence>
<evidence type="ECO:0007744" key="33">
    <source>
    </source>
</evidence>
<evidence type="ECO:0007744" key="34">
    <source>
    </source>
</evidence>
<reference key="1">
    <citation type="journal article" date="1995" name="J. Cell Sci.">
        <title>Cell-cycle-dependent alterations of a highly phosphorylated nucleolar protein p130 are associated with nucleologenesis.</title>
        <authorList>
            <person name="Pai C.-Y."/>
            <person name="Chen H.-K."/>
            <person name="Sheu H.-L."/>
            <person name="Yeh N.-H."/>
        </authorList>
    </citation>
    <scope>NUCLEOTIDE SEQUENCE [MRNA] (ISOFORM ALPHA)</scope>
    <scope>SUBCELLULAR LOCATION</scope>
    <scope>PHOSPHORYLATION</scope>
    <source>
        <tissue>Leukemia</tissue>
    </source>
</reference>
<reference key="2">
    <citation type="submission" date="2004-11" db="EMBL/GenBank/DDBJ databases">
        <authorList>
            <person name="Ying Z.L."/>
            <person name="Hong D."/>
            <person name="Jun C."/>
        </authorList>
    </citation>
    <scope>NUCLEOTIDE SEQUENCE [MRNA] (ISOFORM 3)</scope>
</reference>
<reference key="3">
    <citation type="journal article" date="2004" name="Nature">
        <title>The DNA sequence and comparative analysis of human chromosome 10.</title>
        <authorList>
            <person name="Deloukas P."/>
            <person name="Earthrowl M.E."/>
            <person name="Grafham D.V."/>
            <person name="Rubenfield M."/>
            <person name="French L."/>
            <person name="Steward C.A."/>
            <person name="Sims S.K."/>
            <person name="Jones M.C."/>
            <person name="Searle S."/>
            <person name="Scott C."/>
            <person name="Howe K."/>
            <person name="Hunt S.E."/>
            <person name="Andrews T.D."/>
            <person name="Gilbert J.G.R."/>
            <person name="Swarbreck D."/>
            <person name="Ashurst J.L."/>
            <person name="Taylor A."/>
            <person name="Battles J."/>
            <person name="Bird C.P."/>
            <person name="Ainscough R."/>
            <person name="Almeida J.P."/>
            <person name="Ashwell R.I.S."/>
            <person name="Ambrose K.D."/>
            <person name="Babbage A.K."/>
            <person name="Bagguley C.L."/>
            <person name="Bailey J."/>
            <person name="Banerjee R."/>
            <person name="Bates K."/>
            <person name="Beasley H."/>
            <person name="Bray-Allen S."/>
            <person name="Brown A.J."/>
            <person name="Brown J.Y."/>
            <person name="Burford D.C."/>
            <person name="Burrill W."/>
            <person name="Burton J."/>
            <person name="Cahill P."/>
            <person name="Camire D."/>
            <person name="Carter N.P."/>
            <person name="Chapman J.C."/>
            <person name="Clark S.Y."/>
            <person name="Clarke G."/>
            <person name="Clee C.M."/>
            <person name="Clegg S."/>
            <person name="Corby N."/>
            <person name="Coulson A."/>
            <person name="Dhami P."/>
            <person name="Dutta I."/>
            <person name="Dunn M."/>
            <person name="Faulkner L."/>
            <person name="Frankish A."/>
            <person name="Frankland J.A."/>
            <person name="Garner P."/>
            <person name="Garnett J."/>
            <person name="Gribble S."/>
            <person name="Griffiths C."/>
            <person name="Grocock R."/>
            <person name="Gustafson E."/>
            <person name="Hammond S."/>
            <person name="Harley J.L."/>
            <person name="Hart E."/>
            <person name="Heath P.D."/>
            <person name="Ho T.P."/>
            <person name="Hopkins B."/>
            <person name="Horne J."/>
            <person name="Howden P.J."/>
            <person name="Huckle E."/>
            <person name="Hynds C."/>
            <person name="Johnson C."/>
            <person name="Johnson D."/>
            <person name="Kana A."/>
            <person name="Kay M."/>
            <person name="Kimberley A.M."/>
            <person name="Kershaw J.K."/>
            <person name="Kokkinaki M."/>
            <person name="Laird G.K."/>
            <person name="Lawlor S."/>
            <person name="Lee H.M."/>
            <person name="Leongamornlert D.A."/>
            <person name="Laird G."/>
            <person name="Lloyd C."/>
            <person name="Lloyd D.M."/>
            <person name="Loveland J."/>
            <person name="Lovell J."/>
            <person name="McLaren S."/>
            <person name="McLay K.E."/>
            <person name="McMurray A."/>
            <person name="Mashreghi-Mohammadi M."/>
            <person name="Matthews L."/>
            <person name="Milne S."/>
            <person name="Nickerson T."/>
            <person name="Nguyen M."/>
            <person name="Overton-Larty E."/>
            <person name="Palmer S.A."/>
            <person name="Pearce A.V."/>
            <person name="Peck A.I."/>
            <person name="Pelan S."/>
            <person name="Phillimore B."/>
            <person name="Porter K."/>
            <person name="Rice C.M."/>
            <person name="Rogosin A."/>
            <person name="Ross M.T."/>
            <person name="Sarafidou T."/>
            <person name="Sehra H.K."/>
            <person name="Shownkeen R."/>
            <person name="Skuce C.D."/>
            <person name="Smith M."/>
            <person name="Standring L."/>
            <person name="Sycamore N."/>
            <person name="Tester J."/>
            <person name="Thorpe A."/>
            <person name="Torcasso W."/>
            <person name="Tracey A."/>
            <person name="Tromans A."/>
            <person name="Tsolas J."/>
            <person name="Wall M."/>
            <person name="Walsh J."/>
            <person name="Wang H."/>
            <person name="Weinstock K."/>
            <person name="West A.P."/>
            <person name="Willey D.L."/>
            <person name="Whitehead S.L."/>
            <person name="Wilming L."/>
            <person name="Wray P.W."/>
            <person name="Young L."/>
            <person name="Chen Y."/>
            <person name="Lovering R.C."/>
            <person name="Moschonas N.K."/>
            <person name="Siebert R."/>
            <person name="Fechtel K."/>
            <person name="Bentley D."/>
            <person name="Durbin R.M."/>
            <person name="Hubbard T."/>
            <person name="Doucette-Stamm L."/>
            <person name="Beck S."/>
            <person name="Smith D.R."/>
            <person name="Rogers J."/>
        </authorList>
    </citation>
    <scope>NUCLEOTIDE SEQUENCE [LARGE SCALE GENOMIC DNA]</scope>
</reference>
<reference key="4">
    <citation type="submission" date="2005-09" db="EMBL/GenBank/DDBJ databases">
        <authorList>
            <person name="Mural R.J."/>
            <person name="Istrail S."/>
            <person name="Sutton G.G."/>
            <person name="Florea L."/>
            <person name="Halpern A.L."/>
            <person name="Mobarry C.M."/>
            <person name="Lippert R."/>
            <person name="Walenz B."/>
            <person name="Shatkay H."/>
            <person name="Dew I."/>
            <person name="Miller J.R."/>
            <person name="Flanigan M.J."/>
            <person name="Edwards N.J."/>
            <person name="Bolanos R."/>
            <person name="Fasulo D."/>
            <person name="Halldorsson B.V."/>
            <person name="Hannenhalli S."/>
            <person name="Turner R."/>
            <person name="Yooseph S."/>
            <person name="Lu F."/>
            <person name="Nusskern D.R."/>
            <person name="Shue B.C."/>
            <person name="Zheng X.H."/>
            <person name="Zhong F."/>
            <person name="Delcher A.L."/>
            <person name="Huson D.H."/>
            <person name="Kravitz S.A."/>
            <person name="Mouchard L."/>
            <person name="Reinert K."/>
            <person name="Remington K.A."/>
            <person name="Clark A.G."/>
            <person name="Waterman M.S."/>
            <person name="Eichler E.E."/>
            <person name="Adams M.D."/>
            <person name="Hunkapiller M.W."/>
            <person name="Myers E.W."/>
            <person name="Venter J.C."/>
        </authorList>
    </citation>
    <scope>NUCLEOTIDE SEQUENCE [LARGE SCALE GENOMIC DNA]</scope>
</reference>
<reference key="5">
    <citation type="journal article" date="2004" name="Genome Res.">
        <title>The status, quality, and expansion of the NIH full-length cDNA project: the Mammalian Gene Collection (MGC).</title>
        <authorList>
            <consortium name="The MGC Project Team"/>
        </authorList>
    </citation>
    <scope>NUCLEOTIDE SEQUENCE [LARGE SCALE MRNA] (ISOFORM 3)</scope>
    <source>
        <tissue>Lung</tissue>
    </source>
</reference>
<reference key="6">
    <citation type="journal article" date="1994" name="DNA Res.">
        <title>Prediction of the coding sequences of unidentified human genes. I. The coding sequences of 40 new genes (KIAA0001-KIAA0040) deduced by analysis of randomly sampled cDNA clones from human immature myeloid cell line KG-1.</title>
        <authorList>
            <person name="Nomura N."/>
            <person name="Miyajima N."/>
            <person name="Sazuka T."/>
            <person name="Tanaka A."/>
            <person name="Kawarabayasi Y."/>
            <person name="Sato S."/>
            <person name="Nagase T."/>
            <person name="Seki N."/>
            <person name="Ishikawa K."/>
            <person name="Tabata S."/>
        </authorList>
    </citation>
    <scope>NUCLEOTIDE SEQUENCE [LARGE SCALE MRNA] OF 3-699 (ISOFORM BETA)</scope>
    <scope>VARIANT PRO-456</scope>
    <source>
        <tissue>Bone marrow</tissue>
    </source>
</reference>
<reference key="7">
    <citation type="journal article" date="1996" name="Biochem. Biophys. Res. Commun.">
        <title>Cell proliferation-dependent expression of two isoforms of the nucleolar phosphoprotein p130.</title>
        <authorList>
            <person name="Pai C.-Y."/>
            <person name="Yeh N.-H."/>
        </authorList>
    </citation>
    <scope>ALTERNATIVE SPLICING</scope>
</reference>
<reference key="8">
    <citation type="journal article" date="1997" name="Biochem. Biophys. Res. Commun.">
        <title>The nucleolar phosphoprotein P130 is a GTPase/ATPase with intrinsic property to form large complexes triggered by F- and Mg2+.</title>
        <authorList>
            <person name="Chen H.-K."/>
            <person name="Yeh N.-H."/>
        </authorList>
    </citation>
    <scope>FUNCTION</scope>
</reference>
<reference key="9">
    <citation type="journal article" date="1999" name="Mol. Cell. Biol.">
        <title>Human Nopp140, which interacts with RNA polymerase I: implications for rRNA gene transcription and nucleolar structural organization.</title>
        <authorList>
            <person name="Chen H.-K."/>
            <person name="Pai C.-Y."/>
            <person name="Huang J.-Y."/>
            <person name="Yeh N.-H."/>
        </authorList>
    </citation>
    <scope>FUNCTION</scope>
    <scope>INTERACTION WITH RPA194</scope>
</reference>
<reference key="10">
    <citation type="journal article" date="2004" name="Anal. Chem.">
        <title>Robust phosphoproteomic profiling of tyrosine phosphorylation sites from human T cells using immobilized metal affinity chromatography and tandem mass spectrometry.</title>
        <authorList>
            <person name="Brill L.M."/>
            <person name="Salomon A.R."/>
            <person name="Ficarro S.B."/>
            <person name="Mukherji M."/>
            <person name="Stettler-Gill M."/>
            <person name="Peters E.C."/>
        </authorList>
    </citation>
    <scope>PHOSPHORYLATION [LARGE SCALE ANALYSIS] AT THR-607 AND THR-610</scope>
    <scope>IDENTIFICATION BY MASS SPECTROMETRY [LARGE SCALE ANALYSIS]</scope>
    <source>
        <tissue>Leukemic T-cell</tissue>
    </source>
</reference>
<reference key="11">
    <citation type="journal article" date="2006" name="Cell">
        <title>Global, in vivo, and site-specific phosphorylation dynamics in signaling networks.</title>
        <authorList>
            <person name="Olsen J.V."/>
            <person name="Blagoev B."/>
            <person name="Gnad F."/>
            <person name="Macek B."/>
            <person name="Kumar C."/>
            <person name="Mortensen P."/>
            <person name="Mann M."/>
        </authorList>
    </citation>
    <scope>PHOSPHORYLATION [LARGE SCALE ANALYSIS] AT SER-538; SER-563 AND SER-698</scope>
    <scope>IDENTIFICATION BY MASS SPECTROMETRY [LARGE SCALE ANALYSIS]</scope>
    <source>
        <tissue>Cervix carcinoma</tissue>
    </source>
</reference>
<reference key="12">
    <citation type="journal article" date="2006" name="Nat. Biotechnol.">
        <title>A probability-based approach for high-throughput protein phosphorylation analysis and site localization.</title>
        <authorList>
            <person name="Beausoleil S.A."/>
            <person name="Villen J."/>
            <person name="Gerber S.A."/>
            <person name="Rush J."/>
            <person name="Gygi S.P."/>
        </authorList>
    </citation>
    <scope>PHOSPHORYLATION [LARGE SCALE ANALYSIS] AT THR-607; THR-610; SER-643 AND SER-698</scope>
    <scope>IDENTIFICATION BY MASS SPECTROMETRY [LARGE SCALE ANALYSIS]</scope>
    <source>
        <tissue>Cervix carcinoma</tissue>
    </source>
</reference>
<reference key="13">
    <citation type="journal article" date="2007" name="J. Proteome Res.">
        <title>Improved titanium dioxide enrichment of phosphopeptides from HeLa cells and high confident phosphopeptide identification by cross-validation of MS/MS and MS/MS/MS spectra.</title>
        <authorList>
            <person name="Yu L.R."/>
            <person name="Zhu Z."/>
            <person name="Chan K.C."/>
            <person name="Issaq H.J."/>
            <person name="Dimitrov D.S."/>
            <person name="Veenstra T.D."/>
        </authorList>
    </citation>
    <scope>PHOSPHORYLATION [LARGE SCALE ANALYSIS] AT SER-508; SER-538; THR-607; THR-610 AND SER-643</scope>
    <scope>IDENTIFICATION BY MASS SPECTROMETRY [LARGE SCALE ANALYSIS]</scope>
    <source>
        <tissue>Cervix carcinoma</tissue>
    </source>
</reference>
<reference key="14">
    <citation type="journal article" date="2008" name="Proc. Natl. Acad. Sci. U.S.A.">
        <title>A quantitative atlas of mitotic phosphorylation.</title>
        <authorList>
            <person name="Dephoure N."/>
            <person name="Zhou C."/>
            <person name="Villen J."/>
            <person name="Beausoleil S.A."/>
            <person name="Bakalarski C.E."/>
            <person name="Elledge S.J."/>
            <person name="Gygi S.P."/>
        </authorList>
    </citation>
    <scope>PHOSPHORYLATION [LARGE SCALE ANALYSIS] AT SER-87; SER-90; SER-91; SER-366; SER-508; SER-580; SER-582; SER-686 AND SER-698</scope>
    <scope>IDENTIFICATION BY MASS SPECTROMETRY [LARGE SCALE ANALYSIS]</scope>
    <source>
        <tissue>Cervix carcinoma</tissue>
    </source>
</reference>
<reference key="15">
    <citation type="journal article" date="2008" name="Proteomics">
        <title>Large-scale phosphoproteome analysis of human liver tissue by enrichment and fractionation of phosphopeptides with strong anion exchange chromatography.</title>
        <authorList>
            <person name="Han G."/>
            <person name="Ye M."/>
            <person name="Zhou H."/>
            <person name="Jiang X."/>
            <person name="Feng S."/>
            <person name="Jiang X."/>
            <person name="Tian R."/>
            <person name="Wan D."/>
            <person name="Zou H."/>
            <person name="Gu J."/>
        </authorList>
    </citation>
    <scope>PHOSPHORYLATION [LARGE SCALE ANALYSIS] AT SER-563</scope>
    <scope>IDENTIFICATION BY MASS SPECTROMETRY [LARGE SCALE ANALYSIS]</scope>
    <source>
        <tissue>Liver</tissue>
    </source>
</reference>
<reference key="16">
    <citation type="journal article" date="2009" name="Anal. Chem.">
        <title>Lys-N and trypsin cover complementary parts of the phosphoproteome in a refined SCX-based approach.</title>
        <authorList>
            <person name="Gauci S."/>
            <person name="Helbig A.O."/>
            <person name="Slijper M."/>
            <person name="Krijgsveld J."/>
            <person name="Heck A.J."/>
            <person name="Mohammed S."/>
        </authorList>
    </citation>
    <scope>IDENTIFICATION BY MASS SPECTROMETRY [LARGE SCALE ANALYSIS]</scope>
</reference>
<reference key="17">
    <citation type="journal article" date="2009" name="Sci. Signal.">
        <title>Quantitative phosphoproteomic analysis of T cell receptor signaling reveals system-wide modulation of protein-protein interactions.</title>
        <authorList>
            <person name="Mayya V."/>
            <person name="Lundgren D.H."/>
            <person name="Hwang S.-I."/>
            <person name="Rezaul K."/>
            <person name="Wu L."/>
            <person name="Eng J.K."/>
            <person name="Rodionov V."/>
            <person name="Han D.K."/>
        </authorList>
    </citation>
    <scope>PHOSPHORYLATION [LARGE SCALE ANALYSIS] AT SER-698</scope>
    <scope>IDENTIFICATION BY MASS SPECTROMETRY [LARGE SCALE ANALYSIS]</scope>
    <source>
        <tissue>Leukemic T-cell</tissue>
    </source>
</reference>
<reference key="18">
    <citation type="journal article" date="2009" name="Science">
        <title>Lysine acetylation targets protein complexes and co-regulates major cellular functions.</title>
        <authorList>
            <person name="Choudhary C."/>
            <person name="Kumar C."/>
            <person name="Gnad F."/>
            <person name="Nielsen M.L."/>
            <person name="Rehman M."/>
            <person name="Walther T.C."/>
            <person name="Olsen J.V."/>
            <person name="Mann M."/>
        </authorList>
    </citation>
    <scope>ACETYLATION [LARGE SCALE ANALYSIS] AT LYS-33; LYS-415 AND LYS-663</scope>
    <scope>IDENTIFICATION BY MASS SPECTROMETRY [LARGE SCALE ANALYSIS]</scope>
</reference>
<reference key="19">
    <citation type="journal article" date="2010" name="Sci. Signal.">
        <title>Quantitative phosphoproteomics reveals widespread full phosphorylation site occupancy during mitosis.</title>
        <authorList>
            <person name="Olsen J.V."/>
            <person name="Vermeulen M."/>
            <person name="Santamaria A."/>
            <person name="Kumar C."/>
            <person name="Miller M.L."/>
            <person name="Jensen L.J."/>
            <person name="Gnad F."/>
            <person name="Cox J."/>
            <person name="Jensen T.S."/>
            <person name="Nigg E.A."/>
            <person name="Brunak S."/>
            <person name="Mann M."/>
        </authorList>
    </citation>
    <scope>PHOSPHORYLATION [LARGE SCALE ANALYSIS] AT SER-397; SER-508; SER-538; SER-563; SER-580; SER-582; SER-643 AND SER-698</scope>
    <scope>IDENTIFICATION BY MASS SPECTROMETRY [LARGE SCALE ANALYSIS]</scope>
    <source>
        <tissue>Cervix carcinoma</tissue>
    </source>
</reference>
<reference key="20">
    <citation type="journal article" date="2011" name="BMC Syst. Biol.">
        <title>Initial characterization of the human central proteome.</title>
        <authorList>
            <person name="Burkard T.R."/>
            <person name="Planyavsky M."/>
            <person name="Kaupe I."/>
            <person name="Breitwieser F.P."/>
            <person name="Buerckstuemmer T."/>
            <person name="Bennett K.L."/>
            <person name="Superti-Furga G."/>
            <person name="Colinge J."/>
        </authorList>
    </citation>
    <scope>IDENTIFICATION BY MASS SPECTROMETRY [LARGE SCALE ANALYSIS]</scope>
</reference>
<reference key="21">
    <citation type="journal article" date="2011" name="Sci. Signal.">
        <title>System-wide temporal characterization of the proteome and phosphoproteome of human embryonic stem cell differentiation.</title>
        <authorList>
            <person name="Rigbolt K.T."/>
            <person name="Prokhorova T.A."/>
            <person name="Akimov V."/>
            <person name="Henningsen J."/>
            <person name="Johansen P.T."/>
            <person name="Kratchmarova I."/>
            <person name="Kassem M."/>
            <person name="Mann M."/>
            <person name="Olsen J.V."/>
            <person name="Blagoev B."/>
        </authorList>
    </citation>
    <scope>PHOSPHORYLATION [LARGE SCALE ANALYSIS] AT SER-397; SER-538; SER-622; SER-643 AND SER-698</scope>
    <scope>IDENTIFICATION BY MASS SPECTROMETRY [LARGE SCALE ANALYSIS]</scope>
</reference>
<reference key="22">
    <citation type="journal article" date="2013" name="J. Proteome Res.">
        <title>Toward a comprehensive characterization of a human cancer cell phosphoproteome.</title>
        <authorList>
            <person name="Zhou H."/>
            <person name="Di Palma S."/>
            <person name="Preisinger C."/>
            <person name="Peng M."/>
            <person name="Polat A.N."/>
            <person name="Heck A.J."/>
            <person name="Mohammed S."/>
        </authorList>
    </citation>
    <scope>PHOSPHORYLATION [LARGE SCALE ANALYSIS] AT THR-188; SER-397; SER-456; SER-508; SER-538; THR-607; THR-610; SER-643 AND SER-698</scope>
    <scope>IDENTIFICATION BY MASS SPECTROMETRY [LARGE SCALE ANALYSIS]</scope>
    <source>
        <tissue>Cervix carcinoma</tissue>
        <tissue>Erythroleukemia</tissue>
    </source>
</reference>
<reference key="23">
    <citation type="journal article" date="2014" name="J. Proteomics">
        <title>An enzyme assisted RP-RPLC approach for in-depth analysis of human liver phosphoproteome.</title>
        <authorList>
            <person name="Bian Y."/>
            <person name="Song C."/>
            <person name="Cheng K."/>
            <person name="Dong M."/>
            <person name="Wang F."/>
            <person name="Huang J."/>
            <person name="Sun D."/>
            <person name="Wang L."/>
            <person name="Ye M."/>
            <person name="Zou H."/>
        </authorList>
    </citation>
    <scope>PHOSPHORYLATION [LARGE SCALE ANALYSIS] AT SER-362; SER-363 AND SER-698</scope>
    <scope>IDENTIFICATION BY MASS SPECTROMETRY [LARGE SCALE ANALYSIS]</scope>
    <source>
        <tissue>Liver</tissue>
    </source>
</reference>
<reference key="24">
    <citation type="journal article" date="2014" name="Mol. Cell. Proteomics">
        <title>Immunoaffinity enrichment and mass spectrometry analysis of protein methylation.</title>
        <authorList>
            <person name="Guo A."/>
            <person name="Gu H."/>
            <person name="Zhou J."/>
            <person name="Mulhern D."/>
            <person name="Wang Y."/>
            <person name="Lee K.A."/>
            <person name="Yang V."/>
            <person name="Aguiar M."/>
            <person name="Kornhauser J."/>
            <person name="Jia X."/>
            <person name="Ren J."/>
            <person name="Beausoleil S.A."/>
            <person name="Silva J.C."/>
            <person name="Vemulapalli V."/>
            <person name="Bedford M.T."/>
            <person name="Comb M.J."/>
        </authorList>
    </citation>
    <scope>METHYLATION [LARGE SCALE ANALYSIS] AT ARG-683</scope>
    <scope>IDENTIFICATION BY MASS SPECTROMETRY [LARGE SCALE ANALYSIS]</scope>
    <source>
        <tissue>Colon carcinoma</tissue>
    </source>
</reference>
<reference key="25">
    <citation type="journal article" date="2014" name="Nat. Struct. Mol. Biol.">
        <title>Uncovering global SUMOylation signaling networks in a site-specific manner.</title>
        <authorList>
            <person name="Hendriks I.A."/>
            <person name="D'Souza R.C."/>
            <person name="Yang B."/>
            <person name="Verlaan-de Vries M."/>
            <person name="Mann M."/>
            <person name="Vertegaal A.C."/>
        </authorList>
    </citation>
    <scope>SUMOYLATION [LARGE SCALE ANALYSIS] AT LYS-67 AND LYS-193</scope>
    <scope>IDENTIFICATION BY MASS SPECTROMETRY [LARGE SCALE ANALYSIS]</scope>
</reference>
<reference key="26">
    <citation type="journal article" date="2014" name="Proc. Natl. Acad. Sci. U.S.A.">
        <title>Mapping of SUMO sites and analysis of SUMOylation changes induced by external stimuli.</title>
        <authorList>
            <person name="Impens F."/>
            <person name="Radoshevich L."/>
            <person name="Cossart P."/>
            <person name="Ribet D."/>
        </authorList>
    </citation>
    <scope>SUMOYLATION [LARGE SCALE ANALYSIS] AT LYS-415 AND LYS-572</scope>
    <scope>IDENTIFICATION BY MASS SPECTROMETRY [LARGE SCALE ANALYSIS]</scope>
</reference>
<reference key="27">
    <citation type="journal article" date="2015" name="Cell Rep.">
        <title>SUMO-2 orchestrates chromatin modifiers in response to DNA damage.</title>
        <authorList>
            <person name="Hendriks I.A."/>
            <person name="Treffers L.W."/>
            <person name="Verlaan-de Vries M."/>
            <person name="Olsen J.V."/>
            <person name="Vertegaal A.C."/>
        </authorList>
    </citation>
    <scope>SUMOYLATION [LARGE SCALE ANALYSIS] AT LYS-67 AND LYS-604</scope>
    <scope>IDENTIFICATION BY MASS SPECTROMETRY [LARGE SCALE ANALYSIS]</scope>
</reference>
<reference key="28">
    <citation type="journal article" date="2015" name="Mol. Cell. Proteomics">
        <title>System-wide analysis of SUMOylation dynamics in response to replication stress reveals novel small ubiquitin-like modified target proteins and acceptor lysines relevant for genome stability.</title>
        <authorList>
            <person name="Xiao Z."/>
            <person name="Chang J.G."/>
            <person name="Hendriks I.A."/>
            <person name="Sigurdsson J.O."/>
            <person name="Olsen J.V."/>
            <person name="Vertegaal A.C."/>
        </authorList>
    </citation>
    <scope>SUMOYLATION [LARGE SCALE ANALYSIS] AT LYS-67 AND LYS-193</scope>
    <scope>IDENTIFICATION BY MASS SPECTROMETRY [LARGE SCALE ANALYSIS]</scope>
</reference>
<reference key="29">
    <citation type="journal article" date="2015" name="Nature">
        <title>Cell-fate determination by ubiquitin-dependent regulation of translation.</title>
        <authorList>
            <person name="Werner A."/>
            <person name="Iwasaki S."/>
            <person name="McGourty C.A."/>
            <person name="Medina-Ruiz S."/>
            <person name="Teerikorpi N."/>
            <person name="Fedrigo I."/>
            <person name="Ingolia N.T."/>
            <person name="Rape M."/>
        </authorList>
    </citation>
    <scope>FUNCTION</scope>
    <scope>UBIQUITINATION</scope>
    <scope>SUBUNIT</scope>
</reference>
<reference key="30">
    <citation type="journal article" date="2015" name="Proteomics">
        <title>N-terminome analysis of the human mitochondrial proteome.</title>
        <authorList>
            <person name="Vaca Jacome A.S."/>
            <person name="Rabilloud T."/>
            <person name="Schaeffer-Reiss C."/>
            <person name="Rompais M."/>
            <person name="Ayoub D."/>
            <person name="Lane L."/>
            <person name="Bairoch A."/>
            <person name="Van Dorsselaer A."/>
            <person name="Carapito C."/>
        </authorList>
    </citation>
    <scope>IDENTIFICATION BY MASS SPECTROMETRY [LARGE SCALE ANALYSIS]</scope>
</reference>
<reference key="31">
    <citation type="journal article" date="2017" name="Nat. Struct. Mol. Biol.">
        <title>Site-specific mapping of the human SUMO proteome reveals co-modification with phosphorylation.</title>
        <authorList>
            <person name="Hendriks I.A."/>
            <person name="Lyon D."/>
            <person name="Young C."/>
            <person name="Jensen L.J."/>
            <person name="Vertegaal A.C."/>
            <person name="Nielsen M.L."/>
        </authorList>
    </citation>
    <scope>SUMOYLATION [LARGE SCALE ANALYSIS] AT LYS-67; LYS-76; LYS-186; LYS-193; LYS-342; LYS-347; LYS-390; LYS-396; LYS-401; LYS-407; LYS-415; LYS-440; LYS-452; LYS-505; LYS-579; LYS-604; LYS-613; LYS-647; LYS-663 AND LYS-695</scope>
    <scope>IDENTIFICATION BY MASS SPECTROMETRY [LARGE SCALE ANALYSIS]</scope>
</reference>
<keyword id="KW-0007">Acetylation</keyword>
<keyword id="KW-0025">Alternative splicing</keyword>
<keyword id="KW-0067">ATP-binding</keyword>
<keyword id="KW-0963">Cytoplasm</keyword>
<keyword id="KW-0342">GTP-binding</keyword>
<keyword id="KW-1017">Isopeptide bond</keyword>
<keyword id="KW-0488">Methylation</keyword>
<keyword id="KW-0547">Nucleotide-binding</keyword>
<keyword id="KW-0539">Nucleus</keyword>
<keyword id="KW-0597">Phosphoprotein</keyword>
<keyword id="KW-1267">Proteomics identification</keyword>
<keyword id="KW-1185">Reference proteome</keyword>
<keyword id="KW-0677">Repeat</keyword>
<keyword id="KW-0832">Ubl conjugation</keyword>
<sequence>MADAGIRRVVPSDLYPLVLGFLRDNQLSEVANKFAKATGATQQDANASSLLDIYSFWLKSAKVPERKLQANGPVAKKAKKKASSSDSEDSSEEEEEVQGPPAKKAAVPAKRVGLPPGKAAAKASESSSSEESSDDDDEEDQKKQPVQKGVKPQAKAAKAPPKKAKSSDSDSDSSSEDEPPKNQKPKITPVTVKAQTKAPPKPARAAPKIANGKAASSSSSSSSSSSSDDSEEEKAAATPKKTVPKKQVVAKAPVKAATTPTRKSSSSEDSSSDEEEEQKKPMKNKPGPYSSVPPPSAPPPKKSLGTQPPKKAVEKQQPVESSEDSSDESDSSSEEEKKPPTKAVVSKATTKPPPAKKAAESSSDSSDSDSSEDDEAPSKPAGTTKNSSNKPAVTTKSPAVKPAAAPKQPVGGGQKLLTRKADSSSSEEESSSSEEEKTKKMVATTKPKATAKAALSLPAKQAPQGSRDSSSDSDSSSSEEEEEKTSKSAVKKKPQKVAGGAAPSKPASAKKGKAESSNSSSSDDSSEEEEEKLKGKGSPRPQAPKANGTSALTAQNGKAAKNSEEEEEEKKKAAVVVSKSGSLKKRKQNEAAKEAETPQAKKIKLQTPNTFPKRKKGEKRASSPFRRVREEEIEVDSRVADNSFDAKRGAAGDWGERANQVLKFTKGKSFRHEKTKKKRGSYRGGSISVQVNSIKFDSE</sequence>
<dbReference type="EMBL" id="Z34289">
    <property type="protein sequence ID" value="CAA84063.1"/>
    <property type="molecule type" value="mRNA"/>
</dbReference>
<dbReference type="EMBL" id="AY820769">
    <property type="protein sequence ID" value="AAV67777.1"/>
    <property type="molecule type" value="mRNA"/>
</dbReference>
<dbReference type="EMBL" id="AL500527">
    <property type="status" value="NOT_ANNOTATED_CDS"/>
    <property type="molecule type" value="Genomic_DNA"/>
</dbReference>
<dbReference type="EMBL" id="CH471066">
    <property type="protein sequence ID" value="EAW49714.1"/>
    <property type="molecule type" value="Genomic_DNA"/>
</dbReference>
<dbReference type="EMBL" id="CH471066">
    <property type="protein sequence ID" value="EAW49715.1"/>
    <property type="molecule type" value="Genomic_DNA"/>
</dbReference>
<dbReference type="EMBL" id="BC001883">
    <property type="protein sequence ID" value="AAH01883.1"/>
    <property type="molecule type" value="mRNA"/>
</dbReference>
<dbReference type="EMBL" id="D21262">
    <property type="protein sequence ID" value="BAA04803.1"/>
    <property type="molecule type" value="mRNA"/>
</dbReference>
<dbReference type="CCDS" id="CCDS65925.1">
    <molecule id="Q14978-3"/>
</dbReference>
<dbReference type="CCDS" id="CCDS65926.1">
    <molecule id="Q14978-2"/>
</dbReference>
<dbReference type="CCDS" id="CCDS7530.1">
    <molecule id="Q14978-1"/>
</dbReference>
<dbReference type="PIR" id="I38073">
    <property type="entry name" value="I38073"/>
</dbReference>
<dbReference type="RefSeq" id="NP_001271317.1">
    <molecule id="Q14978-2"/>
    <property type="nucleotide sequence ID" value="NM_001284388.2"/>
</dbReference>
<dbReference type="RefSeq" id="NP_001271318.1">
    <molecule id="Q14978-3"/>
    <property type="nucleotide sequence ID" value="NM_001284389.2"/>
</dbReference>
<dbReference type="RefSeq" id="NP_004732.2">
    <molecule id="Q14978-1"/>
    <property type="nucleotide sequence ID" value="NM_004741.5"/>
</dbReference>
<dbReference type="SMR" id="Q14978"/>
<dbReference type="BioGRID" id="114654">
    <property type="interactions" value="346"/>
</dbReference>
<dbReference type="ComplexPortal" id="CPX-8940">
    <property type="entry name" value="Ribosome biogenesis complex"/>
</dbReference>
<dbReference type="CORUM" id="Q14978"/>
<dbReference type="FunCoup" id="Q14978">
    <property type="interactions" value="3045"/>
</dbReference>
<dbReference type="IntAct" id="Q14978">
    <property type="interactions" value="251"/>
</dbReference>
<dbReference type="MINT" id="Q14978"/>
<dbReference type="STRING" id="9606.ENSP00000385410"/>
<dbReference type="DrugBank" id="DB00997">
    <property type="generic name" value="Doxorubicin"/>
</dbReference>
<dbReference type="GlyGen" id="Q14978">
    <property type="glycosylation" value="1 site, 1 O-linked glycan (1 site)"/>
</dbReference>
<dbReference type="iPTMnet" id="Q14978"/>
<dbReference type="PhosphoSitePlus" id="Q14978"/>
<dbReference type="SwissPalm" id="Q14978"/>
<dbReference type="BioMuta" id="NOLC1"/>
<dbReference type="DMDM" id="145559503"/>
<dbReference type="jPOST" id="Q14978"/>
<dbReference type="MassIVE" id="Q14978"/>
<dbReference type="PaxDb" id="9606-ENSP00000385410"/>
<dbReference type="PeptideAtlas" id="Q14978"/>
<dbReference type="ProteomicsDB" id="60269">
    <molecule id="Q14978-1"/>
</dbReference>
<dbReference type="ProteomicsDB" id="60270">
    <molecule id="Q14978-2"/>
</dbReference>
<dbReference type="ProteomicsDB" id="60271">
    <molecule id="Q14978-3"/>
</dbReference>
<dbReference type="Pumba" id="Q14978"/>
<dbReference type="Antibodypedia" id="31392">
    <property type="antibodies" value="289 antibodies from 32 providers"/>
</dbReference>
<dbReference type="DNASU" id="9221"/>
<dbReference type="Ensembl" id="ENST00000405356.5">
    <molecule id="Q14978-2"/>
    <property type="protein sequence ID" value="ENSP00000385410.1"/>
    <property type="gene ID" value="ENSG00000166197.17"/>
</dbReference>
<dbReference type="Ensembl" id="ENST00000488254.6">
    <molecule id="Q14978-3"/>
    <property type="protein sequence ID" value="ENSP00000475080.1"/>
    <property type="gene ID" value="ENSG00000166197.17"/>
</dbReference>
<dbReference type="Ensembl" id="ENST00000605788.6">
    <molecule id="Q14978-1"/>
    <property type="protein sequence ID" value="ENSP00000474710.2"/>
    <property type="gene ID" value="ENSG00000166197.17"/>
</dbReference>
<dbReference type="GeneID" id="9221"/>
<dbReference type="KEGG" id="hsa:9221"/>
<dbReference type="MANE-Select" id="ENST00000605788.6">
    <property type="protein sequence ID" value="ENSP00000474710.2"/>
    <property type="RefSeq nucleotide sequence ID" value="NM_004741.5"/>
    <property type="RefSeq protein sequence ID" value="NP_004732.2"/>
</dbReference>
<dbReference type="UCSC" id="uc001kuo.4">
    <molecule id="Q14978-1"/>
    <property type="organism name" value="human"/>
</dbReference>
<dbReference type="AGR" id="HGNC:15608"/>
<dbReference type="CTD" id="9221"/>
<dbReference type="DisGeNET" id="9221"/>
<dbReference type="GeneCards" id="NOLC1"/>
<dbReference type="HGNC" id="HGNC:15608">
    <property type="gene designation" value="NOLC1"/>
</dbReference>
<dbReference type="HPA" id="ENSG00000166197">
    <property type="expression patterns" value="Low tissue specificity"/>
</dbReference>
<dbReference type="MIM" id="602394">
    <property type="type" value="gene"/>
</dbReference>
<dbReference type="neXtProt" id="NX_Q14978"/>
<dbReference type="OpenTargets" id="ENSG00000166197"/>
<dbReference type="PharmGKB" id="PA31679"/>
<dbReference type="VEuPathDB" id="HostDB:ENSG00000166197"/>
<dbReference type="eggNOG" id="KOG2992">
    <property type="taxonomic scope" value="Eukaryota"/>
</dbReference>
<dbReference type="GeneTree" id="ENSGT00730000111092"/>
<dbReference type="HOGENOM" id="CLU_014527_0_0_1"/>
<dbReference type="InParanoid" id="Q14978"/>
<dbReference type="OMA" id="TWETNKN"/>
<dbReference type="OrthoDB" id="5599646at2759"/>
<dbReference type="PAN-GO" id="Q14978">
    <property type="GO annotations" value="2 GO annotations based on evolutionary models"/>
</dbReference>
<dbReference type="PhylomeDB" id="Q14978"/>
<dbReference type="TreeFam" id="TF341730"/>
<dbReference type="PathwayCommons" id="Q14978"/>
<dbReference type="SignaLink" id="Q14978"/>
<dbReference type="SIGNOR" id="Q14978"/>
<dbReference type="BioGRID-ORCS" id="9221">
    <property type="hits" value="490 hits in 1172 CRISPR screens"/>
</dbReference>
<dbReference type="CD-CODE" id="6F24707C">
    <property type="entry name" value="Cajal body"/>
</dbReference>
<dbReference type="CD-CODE" id="91857CE7">
    <property type="entry name" value="Nucleolus"/>
</dbReference>
<dbReference type="CD-CODE" id="DEE660B4">
    <property type="entry name" value="Stress granule"/>
</dbReference>
<dbReference type="ChiTaRS" id="NOLC1">
    <property type="organism name" value="human"/>
</dbReference>
<dbReference type="GeneWiki" id="Nucleolar_phosphoprotein_p130"/>
<dbReference type="GenomeRNAi" id="9221"/>
<dbReference type="Pharos" id="Q14978">
    <property type="development level" value="Tbio"/>
</dbReference>
<dbReference type="PRO" id="PR:Q14978"/>
<dbReference type="Proteomes" id="UP000005640">
    <property type="component" value="Chromosome 10"/>
</dbReference>
<dbReference type="RNAct" id="Q14978">
    <property type="molecule type" value="protein"/>
</dbReference>
<dbReference type="Bgee" id="ENSG00000166197">
    <property type="expression patterns" value="Expressed in middle temporal gyrus and 206 other cell types or tissues"/>
</dbReference>
<dbReference type="ExpressionAtlas" id="Q14978">
    <property type="expression patterns" value="baseline and differential"/>
</dbReference>
<dbReference type="GO" id="GO:0015030">
    <property type="term" value="C:Cajal body"/>
    <property type="evidence" value="ECO:0007669"/>
    <property type="project" value="Ensembl"/>
</dbReference>
<dbReference type="GO" id="GO:0005737">
    <property type="term" value="C:cytoplasm"/>
    <property type="evidence" value="ECO:0000304"/>
    <property type="project" value="ProtInc"/>
</dbReference>
<dbReference type="GO" id="GO:0001650">
    <property type="term" value="C:fibrillar center"/>
    <property type="evidence" value="ECO:0000314"/>
    <property type="project" value="HPA"/>
</dbReference>
<dbReference type="GO" id="GO:0005730">
    <property type="term" value="C:nucleolus"/>
    <property type="evidence" value="ECO:0000318"/>
    <property type="project" value="GO_Central"/>
</dbReference>
<dbReference type="GO" id="GO:0005654">
    <property type="term" value="C:nucleoplasm"/>
    <property type="evidence" value="ECO:0000318"/>
    <property type="project" value="GO_Central"/>
</dbReference>
<dbReference type="GO" id="GO:0005524">
    <property type="term" value="F:ATP binding"/>
    <property type="evidence" value="ECO:0007669"/>
    <property type="project" value="UniProtKB-KW"/>
</dbReference>
<dbReference type="GO" id="GO:0005525">
    <property type="term" value="F:GTP binding"/>
    <property type="evidence" value="ECO:0007669"/>
    <property type="project" value="UniProtKB-KW"/>
</dbReference>
<dbReference type="GO" id="GO:0140678">
    <property type="term" value="F:molecular function inhibitor activity"/>
    <property type="evidence" value="ECO:0000269"/>
    <property type="project" value="DisProt"/>
</dbReference>
<dbReference type="GO" id="GO:0046982">
    <property type="term" value="F:protein heterodimerization activity"/>
    <property type="evidence" value="ECO:0000353"/>
    <property type="project" value="UniProtKB"/>
</dbReference>
<dbReference type="GO" id="GO:0030674">
    <property type="term" value="F:protein-macromolecule adaptor activity"/>
    <property type="evidence" value="ECO:0000314"/>
    <property type="project" value="GO_Central"/>
</dbReference>
<dbReference type="GO" id="GO:0003723">
    <property type="term" value="F:RNA binding"/>
    <property type="evidence" value="ECO:0007005"/>
    <property type="project" value="UniProtKB"/>
</dbReference>
<dbReference type="GO" id="GO:0000278">
    <property type="term" value="P:mitotic cell cycle"/>
    <property type="evidence" value="ECO:0000304"/>
    <property type="project" value="ProtInc"/>
</dbReference>
<dbReference type="GO" id="GO:0014032">
    <property type="term" value="P:neural crest cell development"/>
    <property type="evidence" value="ECO:0000315"/>
    <property type="project" value="UniProtKB"/>
</dbReference>
<dbReference type="GO" id="GO:0014029">
    <property type="term" value="P:neural crest formation"/>
    <property type="evidence" value="ECO:0000315"/>
    <property type="project" value="UniProtKB"/>
</dbReference>
<dbReference type="GO" id="GO:0007000">
    <property type="term" value="P:nucleolus organization"/>
    <property type="evidence" value="ECO:0007669"/>
    <property type="project" value="Ensembl"/>
</dbReference>
<dbReference type="GO" id="GO:0006417">
    <property type="term" value="P:regulation of translation"/>
    <property type="evidence" value="ECO:0000315"/>
    <property type="project" value="UniProtKB"/>
</dbReference>
<dbReference type="GO" id="GO:0006364">
    <property type="term" value="P:rRNA processing"/>
    <property type="evidence" value="ECO:0000304"/>
    <property type="project" value="ProtInc"/>
</dbReference>
<dbReference type="DisProt" id="DP01178"/>
<dbReference type="InterPro" id="IPR006594">
    <property type="entry name" value="LisH"/>
</dbReference>
<dbReference type="InterPro" id="IPR039191">
    <property type="entry name" value="Nopp140-like"/>
</dbReference>
<dbReference type="InterPro" id="IPR007718">
    <property type="entry name" value="Srp40_C"/>
</dbReference>
<dbReference type="PANTHER" id="PTHR23216">
    <property type="entry name" value="NUCLEOLAR AND COILED-BODY PHOSPHOPROTEIN 1"/>
    <property type="match status" value="1"/>
</dbReference>
<dbReference type="PANTHER" id="PTHR23216:SF1">
    <property type="entry name" value="NUCLEOLAR AND COILED-BODY PHOSPHOPROTEIN 1"/>
    <property type="match status" value="1"/>
</dbReference>
<dbReference type="Pfam" id="PF05022">
    <property type="entry name" value="SRP40_C"/>
    <property type="match status" value="1"/>
</dbReference>
<dbReference type="PROSITE" id="PS50896">
    <property type="entry name" value="LISH"/>
    <property type="match status" value="1"/>
</dbReference>